<comment type="function">
    <text evidence="1">This protein is involved in the repair of mismatches in DNA. It is possible that it carries out the mismatch recognition step. This protein has a weak ATPase activity.</text>
</comment>
<comment type="similarity">
    <text evidence="1">Belongs to the DNA mismatch repair MutS family.</text>
</comment>
<dbReference type="EMBL" id="AP008971">
    <property type="protein sequence ID" value="BAG08161.1"/>
    <property type="molecule type" value="Genomic_DNA"/>
</dbReference>
<dbReference type="RefSeq" id="WP_012290601.1">
    <property type="nucleotide sequence ID" value="NC_010376.1"/>
</dbReference>
<dbReference type="SMR" id="B0S1C1"/>
<dbReference type="STRING" id="334413.FMG_0743"/>
<dbReference type="KEGG" id="fma:FMG_0743"/>
<dbReference type="eggNOG" id="COG0249">
    <property type="taxonomic scope" value="Bacteria"/>
</dbReference>
<dbReference type="HOGENOM" id="CLU_002472_3_1_9"/>
<dbReference type="Proteomes" id="UP000001319">
    <property type="component" value="Chromosome"/>
</dbReference>
<dbReference type="GO" id="GO:0005829">
    <property type="term" value="C:cytosol"/>
    <property type="evidence" value="ECO:0007669"/>
    <property type="project" value="TreeGrafter"/>
</dbReference>
<dbReference type="GO" id="GO:0005524">
    <property type="term" value="F:ATP binding"/>
    <property type="evidence" value="ECO:0007669"/>
    <property type="project" value="UniProtKB-UniRule"/>
</dbReference>
<dbReference type="GO" id="GO:0140664">
    <property type="term" value="F:ATP-dependent DNA damage sensor activity"/>
    <property type="evidence" value="ECO:0007669"/>
    <property type="project" value="InterPro"/>
</dbReference>
<dbReference type="GO" id="GO:0003684">
    <property type="term" value="F:damaged DNA binding"/>
    <property type="evidence" value="ECO:0007669"/>
    <property type="project" value="UniProtKB-UniRule"/>
</dbReference>
<dbReference type="GO" id="GO:0030983">
    <property type="term" value="F:mismatched DNA binding"/>
    <property type="evidence" value="ECO:0007669"/>
    <property type="project" value="InterPro"/>
</dbReference>
<dbReference type="GO" id="GO:0006298">
    <property type="term" value="P:mismatch repair"/>
    <property type="evidence" value="ECO:0007669"/>
    <property type="project" value="UniProtKB-UniRule"/>
</dbReference>
<dbReference type="CDD" id="cd03284">
    <property type="entry name" value="ABC_MutS1"/>
    <property type="match status" value="1"/>
</dbReference>
<dbReference type="FunFam" id="3.40.1170.10:FF:000001">
    <property type="entry name" value="DNA mismatch repair protein MutS"/>
    <property type="match status" value="1"/>
</dbReference>
<dbReference type="FunFam" id="3.40.50.300:FF:000870">
    <property type="entry name" value="MutS protein homolog 4"/>
    <property type="match status" value="1"/>
</dbReference>
<dbReference type="Gene3D" id="1.10.1420.10">
    <property type="match status" value="2"/>
</dbReference>
<dbReference type="Gene3D" id="3.40.1170.10">
    <property type="entry name" value="DNA repair protein MutS, domain I"/>
    <property type="match status" value="1"/>
</dbReference>
<dbReference type="Gene3D" id="3.30.420.110">
    <property type="entry name" value="MutS, connector domain"/>
    <property type="match status" value="1"/>
</dbReference>
<dbReference type="Gene3D" id="3.40.50.300">
    <property type="entry name" value="P-loop containing nucleotide triphosphate hydrolases"/>
    <property type="match status" value="1"/>
</dbReference>
<dbReference type="HAMAP" id="MF_00096">
    <property type="entry name" value="MutS"/>
    <property type="match status" value="1"/>
</dbReference>
<dbReference type="InterPro" id="IPR005748">
    <property type="entry name" value="DNA_mismatch_repair_MutS"/>
</dbReference>
<dbReference type="InterPro" id="IPR007695">
    <property type="entry name" value="DNA_mismatch_repair_MutS-lik_N"/>
</dbReference>
<dbReference type="InterPro" id="IPR017261">
    <property type="entry name" value="DNA_mismatch_repair_MutS/MSH"/>
</dbReference>
<dbReference type="InterPro" id="IPR000432">
    <property type="entry name" value="DNA_mismatch_repair_MutS_C"/>
</dbReference>
<dbReference type="InterPro" id="IPR007861">
    <property type="entry name" value="DNA_mismatch_repair_MutS_clamp"/>
</dbReference>
<dbReference type="InterPro" id="IPR007696">
    <property type="entry name" value="DNA_mismatch_repair_MutS_core"/>
</dbReference>
<dbReference type="InterPro" id="IPR016151">
    <property type="entry name" value="DNA_mismatch_repair_MutS_N"/>
</dbReference>
<dbReference type="InterPro" id="IPR036187">
    <property type="entry name" value="DNA_mismatch_repair_MutS_sf"/>
</dbReference>
<dbReference type="InterPro" id="IPR007860">
    <property type="entry name" value="DNA_mmatch_repair_MutS_con_dom"/>
</dbReference>
<dbReference type="InterPro" id="IPR045076">
    <property type="entry name" value="MutS"/>
</dbReference>
<dbReference type="InterPro" id="IPR036678">
    <property type="entry name" value="MutS_con_dom_sf"/>
</dbReference>
<dbReference type="InterPro" id="IPR027417">
    <property type="entry name" value="P-loop_NTPase"/>
</dbReference>
<dbReference type="NCBIfam" id="TIGR01070">
    <property type="entry name" value="mutS1"/>
    <property type="match status" value="1"/>
</dbReference>
<dbReference type="NCBIfam" id="NF003810">
    <property type="entry name" value="PRK05399.1"/>
    <property type="match status" value="1"/>
</dbReference>
<dbReference type="PANTHER" id="PTHR11361:SF34">
    <property type="entry name" value="DNA MISMATCH REPAIR PROTEIN MSH1, MITOCHONDRIAL"/>
    <property type="match status" value="1"/>
</dbReference>
<dbReference type="PANTHER" id="PTHR11361">
    <property type="entry name" value="DNA MISMATCH REPAIR PROTEIN MUTS FAMILY MEMBER"/>
    <property type="match status" value="1"/>
</dbReference>
<dbReference type="Pfam" id="PF01624">
    <property type="entry name" value="MutS_I"/>
    <property type="match status" value="1"/>
</dbReference>
<dbReference type="Pfam" id="PF05188">
    <property type="entry name" value="MutS_II"/>
    <property type="match status" value="1"/>
</dbReference>
<dbReference type="Pfam" id="PF05192">
    <property type="entry name" value="MutS_III"/>
    <property type="match status" value="1"/>
</dbReference>
<dbReference type="Pfam" id="PF05190">
    <property type="entry name" value="MutS_IV"/>
    <property type="match status" value="1"/>
</dbReference>
<dbReference type="Pfam" id="PF00488">
    <property type="entry name" value="MutS_V"/>
    <property type="match status" value="1"/>
</dbReference>
<dbReference type="PIRSF" id="PIRSF037677">
    <property type="entry name" value="DNA_mis_repair_Msh6"/>
    <property type="match status" value="1"/>
</dbReference>
<dbReference type="SMART" id="SM00534">
    <property type="entry name" value="MUTSac"/>
    <property type="match status" value="1"/>
</dbReference>
<dbReference type="SMART" id="SM00533">
    <property type="entry name" value="MUTSd"/>
    <property type="match status" value="1"/>
</dbReference>
<dbReference type="SUPFAM" id="SSF55271">
    <property type="entry name" value="DNA repair protein MutS, domain I"/>
    <property type="match status" value="1"/>
</dbReference>
<dbReference type="SUPFAM" id="SSF53150">
    <property type="entry name" value="DNA repair protein MutS, domain II"/>
    <property type="match status" value="1"/>
</dbReference>
<dbReference type="SUPFAM" id="SSF48334">
    <property type="entry name" value="DNA repair protein MutS, domain III"/>
    <property type="match status" value="1"/>
</dbReference>
<dbReference type="SUPFAM" id="SSF52540">
    <property type="entry name" value="P-loop containing nucleoside triphosphate hydrolases"/>
    <property type="match status" value="1"/>
</dbReference>
<dbReference type="PROSITE" id="PS00486">
    <property type="entry name" value="DNA_MISMATCH_REPAIR_2"/>
    <property type="match status" value="1"/>
</dbReference>
<protein>
    <recommendedName>
        <fullName evidence="1">DNA mismatch repair protein MutS</fullName>
    </recommendedName>
</protein>
<organism>
    <name type="scientific">Finegoldia magna (strain ATCC 29328 / DSM 20472 / WAL 2508)</name>
    <name type="common">Peptostreptococcus magnus</name>
    <dbReference type="NCBI Taxonomy" id="334413"/>
    <lineage>
        <taxon>Bacteria</taxon>
        <taxon>Bacillati</taxon>
        <taxon>Bacillota</taxon>
        <taxon>Tissierellia</taxon>
        <taxon>Tissierellales</taxon>
        <taxon>Peptoniphilaceae</taxon>
        <taxon>Finegoldia</taxon>
    </lineage>
</organism>
<name>MUTS_FINM2</name>
<reference key="1">
    <citation type="journal article" date="2008" name="DNA Res.">
        <title>Complete genome sequence of Finegoldia magna, an anaerobic opportunistic pathogen.</title>
        <authorList>
            <person name="Goto T."/>
            <person name="Yamashita A."/>
            <person name="Hirakawa H."/>
            <person name="Matsutani M."/>
            <person name="Todo K."/>
            <person name="Ohshima K."/>
            <person name="Toh H."/>
            <person name="Miyamoto K."/>
            <person name="Kuhara S."/>
            <person name="Hattori M."/>
            <person name="Shimizu T."/>
            <person name="Akimoto S."/>
        </authorList>
    </citation>
    <scope>NUCLEOTIDE SEQUENCE [LARGE SCALE GENOMIC DNA]</scope>
    <source>
        <strain>ATCC 29328 / DSM 20472 / WAL 2508</strain>
    </source>
</reference>
<keyword id="KW-0067">ATP-binding</keyword>
<keyword id="KW-0227">DNA damage</keyword>
<keyword id="KW-0234">DNA repair</keyword>
<keyword id="KW-0238">DNA-binding</keyword>
<keyword id="KW-0547">Nucleotide-binding</keyword>
<keyword id="KW-1185">Reference proteome</keyword>
<proteinExistence type="inferred from homology"/>
<evidence type="ECO:0000255" key="1">
    <source>
        <dbReference type="HAMAP-Rule" id="MF_00096"/>
    </source>
</evidence>
<gene>
    <name evidence="1" type="primary">mutS</name>
    <name type="ordered locus">FMG_0743</name>
</gene>
<accession>B0S1C1</accession>
<feature type="chain" id="PRO_1000093627" description="DNA mismatch repair protein MutS">
    <location>
        <begin position="1"/>
        <end position="856"/>
    </location>
</feature>
<feature type="binding site" evidence="1">
    <location>
        <begin position="609"/>
        <end position="616"/>
    </location>
    <ligand>
        <name>ATP</name>
        <dbReference type="ChEBI" id="CHEBI:30616"/>
    </ligand>
</feature>
<sequence length="856" mass="97638">MAYTPMIKQYKEIKEQNKDCILFFRLGDFYEMFFDDALIASKELEIVLTQRDCGENKKCPMCGIPYHVSDVYINKLVSKGYKVAICEQLEDPKLVKGLVKRGIIKIYTPATVIENENSDTGNFNYLMSISKKSNEVAISYIDISTGDVSYTNTTSDDIYKIIENEISKITPKEIIFNDHEFSTNSLETIASKFSIVLTTVNNGTDSIDFINSKITYDNTNSETTNICVANLLKYVFRYQDDLVHINSSRKYYINEFMEIDSNSVINLEIQKNLYTNSKNGSLFGVLNHTKTSMGSRLLHSYLERPLMDKEEILIRQNRVEEIFEDYELLVNLENCLDGIYDLDRLIAKLSYKSANAKDLIALKVSIEKIPYLKNLLNCNKKNVQLIGEKLDDLRDIYDLIDKSIVDDPPVILTEGNLIKPNFSNELDQLRYNRVNGKNELVEYEMSEKDRLGIKNLKIVFNKKLGYFIDVTKSNLNKVGEDYEKRQTLTNSSRFKTKQLEAIESKILDSEDEIFELEYKIFEDIRKIILENLSRIKKSADLIAIIDVSNSLAKCAYLNNYIKPDINTYGLIDVLESRHPIVELSVGQSEFITNDILIGSGKNDIQLITGPNMSGKSTYLRQVALICILNQIGSFVPATKANISIVDKIFTRIGSSDNLFKGESTFMVEMKEMSNIIKYATSNSLLVLDEIGRGTSTYDGLSLAWAIVEYISKDIKAKTLFATHYHELTELEKKLDNLINMKVDIKETNDSIIFLRKITRGSTDKSYGIEVAELAGMPKTLIKRAKSILKEIDKEDTKIDLPIADFAVQNEMEDDKNIHELKDFKDEIKNINVNEITPIQSLQLLNELVIKASKLGD</sequence>